<sequence>MPIEFEQTFRNFLMEHQEKYNRTYHFLILMDSIITAAQRIELYYRTGALKGNLGMAGSINVQGESVMKMDDIANEIVLHYLAASNRVIQVVSEESDDIVDMNKDGGRYFVYFDPLDGSSNVAHGLPVGFLFGIAKRNLDGNMKGPEDFHLREGNDYIAAGMFVIPTGMFTLALRDAGCWRFHADETATYVKPMRMTLPDDPKKWELSFNSANTTVFSEKVQSWIQVNISKYKFRYIGALAGDFHRLLTNGGLFMYPAIVKHPDPKENRPQGKLRLLYEANVVAFMCREAGGDAIDETGTRIMEIKPAGHHQRTTLYVGSKPIIDELASLFKS</sequence>
<accession>Q2LUC0</accession>
<keyword id="KW-0119">Carbohydrate metabolism</keyword>
<keyword id="KW-0963">Cytoplasm</keyword>
<keyword id="KW-0378">Hydrolase</keyword>
<keyword id="KW-0460">Magnesium</keyword>
<keyword id="KW-0479">Metal-binding</keyword>
<keyword id="KW-1185">Reference proteome</keyword>
<proteinExistence type="inferred from homology"/>
<comment type="catalytic activity">
    <reaction evidence="1">
        <text>beta-D-fructose 1,6-bisphosphate + H2O = beta-D-fructose 6-phosphate + phosphate</text>
        <dbReference type="Rhea" id="RHEA:11064"/>
        <dbReference type="ChEBI" id="CHEBI:15377"/>
        <dbReference type="ChEBI" id="CHEBI:32966"/>
        <dbReference type="ChEBI" id="CHEBI:43474"/>
        <dbReference type="ChEBI" id="CHEBI:57634"/>
        <dbReference type="EC" id="3.1.3.11"/>
    </reaction>
</comment>
<comment type="cofactor">
    <cofactor evidence="1">
        <name>Mg(2+)</name>
        <dbReference type="ChEBI" id="CHEBI:18420"/>
    </cofactor>
    <text evidence="1">Binds 2 magnesium ions per subunit.</text>
</comment>
<comment type="pathway">
    <text evidence="1">Carbohydrate biosynthesis; gluconeogenesis.</text>
</comment>
<comment type="subunit">
    <text evidence="1">Homotetramer.</text>
</comment>
<comment type="subcellular location">
    <subcellularLocation>
        <location evidence="1">Cytoplasm</location>
    </subcellularLocation>
</comment>
<comment type="similarity">
    <text evidence="1">Belongs to the FBPase class 1 family.</text>
</comment>
<feature type="chain" id="PRO_0000364732" description="Fructose-1,6-bisphosphatase class 1">
    <location>
        <begin position="1"/>
        <end position="332"/>
    </location>
</feature>
<feature type="binding site" evidence="1">
    <location>
        <position position="93"/>
    </location>
    <ligand>
        <name>Mg(2+)</name>
        <dbReference type="ChEBI" id="CHEBI:18420"/>
        <label>1</label>
    </ligand>
</feature>
<feature type="binding site" evidence="1">
    <location>
        <position position="113"/>
    </location>
    <ligand>
        <name>Mg(2+)</name>
        <dbReference type="ChEBI" id="CHEBI:18420"/>
        <label>1</label>
    </ligand>
</feature>
<feature type="binding site" evidence="1">
    <location>
        <position position="113"/>
    </location>
    <ligand>
        <name>Mg(2+)</name>
        <dbReference type="ChEBI" id="CHEBI:18420"/>
        <label>2</label>
    </ligand>
</feature>
<feature type="binding site" evidence="1">
    <location>
        <position position="115"/>
    </location>
    <ligand>
        <name>Mg(2+)</name>
        <dbReference type="ChEBI" id="CHEBI:18420"/>
        <label>1</label>
    </ligand>
</feature>
<feature type="binding site" evidence="1">
    <location>
        <begin position="116"/>
        <end position="119"/>
    </location>
    <ligand>
        <name>substrate</name>
    </ligand>
</feature>
<feature type="binding site" evidence="1">
    <location>
        <position position="116"/>
    </location>
    <ligand>
        <name>Mg(2+)</name>
        <dbReference type="ChEBI" id="CHEBI:18420"/>
        <label>2</label>
    </ligand>
</feature>
<feature type="binding site" evidence="1">
    <location>
        <position position="209"/>
    </location>
    <ligand>
        <name>substrate</name>
    </ligand>
</feature>
<feature type="binding site" evidence="1">
    <location>
        <position position="235"/>
    </location>
    <ligand>
        <name>substrate</name>
    </ligand>
</feature>
<feature type="binding site" evidence="1">
    <location>
        <position position="272"/>
    </location>
    <ligand>
        <name>substrate</name>
    </ligand>
</feature>
<feature type="binding site" evidence="1">
    <location>
        <position position="278"/>
    </location>
    <ligand>
        <name>Mg(2+)</name>
        <dbReference type="ChEBI" id="CHEBI:18420"/>
        <label>2</label>
    </ligand>
</feature>
<organism>
    <name type="scientific">Syntrophus aciditrophicus (strain SB)</name>
    <dbReference type="NCBI Taxonomy" id="56780"/>
    <lineage>
        <taxon>Bacteria</taxon>
        <taxon>Pseudomonadati</taxon>
        <taxon>Thermodesulfobacteriota</taxon>
        <taxon>Syntrophia</taxon>
        <taxon>Syntrophales</taxon>
        <taxon>Syntrophaceae</taxon>
        <taxon>Syntrophus</taxon>
    </lineage>
</organism>
<name>F16PA_SYNAS</name>
<reference key="1">
    <citation type="journal article" date="2007" name="Proc. Natl. Acad. Sci. U.S.A.">
        <title>The genome of Syntrophus aciditrophicus: life at the thermodynamic limit of microbial growth.</title>
        <authorList>
            <person name="McInerney M.J."/>
            <person name="Rohlin L."/>
            <person name="Mouttaki H."/>
            <person name="Kim U."/>
            <person name="Krupp R.S."/>
            <person name="Rios-Hernandez L."/>
            <person name="Sieber J."/>
            <person name="Struchtemeyer C.G."/>
            <person name="Bhattacharyya A."/>
            <person name="Campbell J.W."/>
            <person name="Gunsalus R.P."/>
        </authorList>
    </citation>
    <scope>NUCLEOTIDE SEQUENCE [LARGE SCALE GENOMIC DNA]</scope>
    <source>
        <strain>SB</strain>
    </source>
</reference>
<evidence type="ECO:0000255" key="1">
    <source>
        <dbReference type="HAMAP-Rule" id="MF_01855"/>
    </source>
</evidence>
<dbReference type="EC" id="3.1.3.11" evidence="1"/>
<dbReference type="EMBL" id="CP000252">
    <property type="protein sequence ID" value="ABC77681.1"/>
    <property type="molecule type" value="Genomic_DNA"/>
</dbReference>
<dbReference type="RefSeq" id="WP_011417703.1">
    <property type="nucleotide sequence ID" value="NC_007759.1"/>
</dbReference>
<dbReference type="SMR" id="Q2LUC0"/>
<dbReference type="FunCoup" id="Q2LUC0">
    <property type="interactions" value="373"/>
</dbReference>
<dbReference type="STRING" id="56780.SYN_01924"/>
<dbReference type="KEGG" id="sat:SYN_01924"/>
<dbReference type="eggNOG" id="COG0158">
    <property type="taxonomic scope" value="Bacteria"/>
</dbReference>
<dbReference type="HOGENOM" id="CLU_039977_2_2_7"/>
<dbReference type="InParanoid" id="Q2LUC0"/>
<dbReference type="OrthoDB" id="9806756at2"/>
<dbReference type="UniPathway" id="UPA00138"/>
<dbReference type="Proteomes" id="UP000001933">
    <property type="component" value="Chromosome"/>
</dbReference>
<dbReference type="GO" id="GO:0005737">
    <property type="term" value="C:cytoplasm"/>
    <property type="evidence" value="ECO:0007669"/>
    <property type="project" value="UniProtKB-SubCell"/>
</dbReference>
<dbReference type="GO" id="GO:0042132">
    <property type="term" value="F:fructose 1,6-bisphosphate 1-phosphatase activity"/>
    <property type="evidence" value="ECO:0007669"/>
    <property type="project" value="UniProtKB-UniRule"/>
</dbReference>
<dbReference type="GO" id="GO:0000287">
    <property type="term" value="F:magnesium ion binding"/>
    <property type="evidence" value="ECO:0007669"/>
    <property type="project" value="UniProtKB-UniRule"/>
</dbReference>
<dbReference type="GO" id="GO:0030388">
    <property type="term" value="P:fructose 1,6-bisphosphate metabolic process"/>
    <property type="evidence" value="ECO:0007669"/>
    <property type="project" value="TreeGrafter"/>
</dbReference>
<dbReference type="GO" id="GO:0006002">
    <property type="term" value="P:fructose 6-phosphate metabolic process"/>
    <property type="evidence" value="ECO:0007669"/>
    <property type="project" value="TreeGrafter"/>
</dbReference>
<dbReference type="GO" id="GO:0006000">
    <property type="term" value="P:fructose metabolic process"/>
    <property type="evidence" value="ECO:0007669"/>
    <property type="project" value="TreeGrafter"/>
</dbReference>
<dbReference type="GO" id="GO:0006094">
    <property type="term" value="P:gluconeogenesis"/>
    <property type="evidence" value="ECO:0007669"/>
    <property type="project" value="UniProtKB-UniRule"/>
</dbReference>
<dbReference type="GO" id="GO:0005986">
    <property type="term" value="P:sucrose biosynthetic process"/>
    <property type="evidence" value="ECO:0007669"/>
    <property type="project" value="TreeGrafter"/>
</dbReference>
<dbReference type="Gene3D" id="3.40.190.80">
    <property type="match status" value="1"/>
</dbReference>
<dbReference type="Gene3D" id="3.30.540.10">
    <property type="entry name" value="Fructose-1,6-Bisphosphatase, subunit A, domain 1"/>
    <property type="match status" value="1"/>
</dbReference>
<dbReference type="HAMAP" id="MF_01855">
    <property type="entry name" value="FBPase_class1"/>
    <property type="match status" value="1"/>
</dbReference>
<dbReference type="InterPro" id="IPR044015">
    <property type="entry name" value="FBPase_C_dom"/>
</dbReference>
<dbReference type="InterPro" id="IPR000146">
    <property type="entry name" value="FBPase_class-1"/>
</dbReference>
<dbReference type="InterPro" id="IPR033391">
    <property type="entry name" value="FBPase_N"/>
</dbReference>
<dbReference type="InterPro" id="IPR028343">
    <property type="entry name" value="FBPtase"/>
</dbReference>
<dbReference type="InterPro" id="IPR000760">
    <property type="entry name" value="Inositol_monophosphatase-like"/>
</dbReference>
<dbReference type="PANTHER" id="PTHR11556">
    <property type="entry name" value="FRUCTOSE-1,6-BISPHOSPHATASE-RELATED"/>
    <property type="match status" value="1"/>
</dbReference>
<dbReference type="PANTHER" id="PTHR11556:SF35">
    <property type="entry name" value="SEDOHEPTULOSE-1,7-BISPHOSPHATASE, CHLOROPLASTIC"/>
    <property type="match status" value="1"/>
</dbReference>
<dbReference type="Pfam" id="PF00316">
    <property type="entry name" value="FBPase"/>
    <property type="match status" value="1"/>
</dbReference>
<dbReference type="Pfam" id="PF18913">
    <property type="entry name" value="FBPase_C"/>
    <property type="match status" value="1"/>
</dbReference>
<dbReference type="PIRSF" id="PIRSF000904">
    <property type="entry name" value="FBPtase_SBPase"/>
    <property type="match status" value="1"/>
</dbReference>
<dbReference type="PRINTS" id="PR00115">
    <property type="entry name" value="F16BPHPHTASE"/>
</dbReference>
<dbReference type="PRINTS" id="PR00377">
    <property type="entry name" value="IMPHPHTASES"/>
</dbReference>
<dbReference type="SUPFAM" id="SSF56655">
    <property type="entry name" value="Carbohydrate phosphatase"/>
    <property type="match status" value="1"/>
</dbReference>
<protein>
    <recommendedName>
        <fullName evidence="1">Fructose-1,6-bisphosphatase class 1</fullName>
        <shortName evidence="1">FBPase class 1</shortName>
        <ecNumber evidence="1">3.1.3.11</ecNumber>
    </recommendedName>
    <alternativeName>
        <fullName evidence="1">D-fructose-1,6-bisphosphate 1-phosphohydrolase class 1</fullName>
    </alternativeName>
</protein>
<gene>
    <name evidence="1" type="primary">fbp</name>
    <name type="ordered locus">SYNAS_18020</name>
    <name type="ORF">SYN_01924</name>
</gene>